<evidence type="ECO:0000255" key="1">
    <source>
        <dbReference type="PROSITE-ProRule" id="PRU00212"/>
    </source>
</evidence>
<evidence type="ECO:0000255" key="2">
    <source>
        <dbReference type="PROSITE-ProRule" id="PRU00502"/>
    </source>
</evidence>
<evidence type="ECO:0000255" key="3">
    <source>
        <dbReference type="PROSITE-ProRule" id="PRU10092"/>
    </source>
</evidence>
<evidence type="ECO:0000255" key="4">
    <source>
        <dbReference type="PROSITE-ProRule" id="PRU10093"/>
    </source>
</evidence>
<evidence type="ECO:0000269" key="5">
    <source>
    </source>
</evidence>
<evidence type="ECO:0000269" key="6">
    <source>
    </source>
</evidence>
<evidence type="ECO:0000305" key="7"/>
<evidence type="ECO:0007829" key="8">
    <source>
        <dbReference type="PDB" id="1VEK"/>
    </source>
</evidence>
<evidence type="ECO:0007829" key="9">
    <source>
        <dbReference type="PDB" id="1WIV"/>
    </source>
</evidence>
<gene>
    <name type="primary">UBP14</name>
    <name type="synonym">TTN6</name>
    <name type="ordered locus">At3g20630</name>
    <name type="ORF">F3H11_1</name>
    <name type="ORF">K10D20.17</name>
    <name type="ORF">K10D20.26</name>
</gene>
<proteinExistence type="evidence at protein level"/>
<accession>Q8L6Y1</accession>
<accession>Q0WV77</accession>
<accession>Q9FPT0</accession>
<accession>Q9LJT6</accession>
<protein>
    <recommendedName>
        <fullName>Ubiquitin carboxyl-terminal hydrolase 14</fullName>
        <ecNumber>3.4.19.12</ecNumber>
    </recommendedName>
    <alternativeName>
        <fullName>Deubiquitinating enzyme 14</fullName>
        <shortName>AtUBP14</shortName>
    </alternativeName>
    <alternativeName>
        <fullName>TITAN-6 protein</fullName>
    </alternativeName>
    <alternativeName>
        <fullName>Ubiquitin thioesterase 14</fullName>
    </alternativeName>
    <alternativeName>
        <fullName>Ubiquitin-specific-processing protease 14</fullName>
    </alternativeName>
</protein>
<name>UBP14_ARATH</name>
<feature type="chain" id="PRO_0000080697" description="Ubiquitin carboxyl-terminal hydrolase 14">
    <location>
        <begin position="1"/>
        <end position="797"/>
    </location>
</feature>
<feature type="domain" description="USP">
    <location>
        <begin position="308"/>
        <end position="796"/>
    </location>
</feature>
<feature type="domain" description="UBA 1" evidence="1">
    <location>
        <begin position="613"/>
        <end position="654"/>
    </location>
</feature>
<feature type="domain" description="UBA 2" evidence="1">
    <location>
        <begin position="670"/>
        <end position="710"/>
    </location>
</feature>
<feature type="zinc finger region" description="UBP-type; degenerate" evidence="2">
    <location>
        <begin position="156"/>
        <end position="266"/>
    </location>
</feature>
<feature type="active site" description="Nucleophile" evidence="3 4">
    <location>
        <position position="317"/>
    </location>
</feature>
<feature type="active site" description="Proton acceptor" evidence="3 4">
    <location>
        <position position="758"/>
    </location>
</feature>
<feature type="binding site" evidence="2">
    <location>
        <position position="180"/>
    </location>
    <ligand>
        <name>Zn(2+)</name>
        <dbReference type="ChEBI" id="CHEBI:29105"/>
    </ligand>
</feature>
<feature type="binding site" evidence="2">
    <location>
        <position position="183"/>
    </location>
    <ligand>
        <name>Zn(2+)</name>
        <dbReference type="ChEBI" id="CHEBI:29105"/>
    </ligand>
</feature>
<feature type="binding site" evidence="2">
    <location>
        <position position="200"/>
    </location>
    <ligand>
        <name>Zn(2+)</name>
        <dbReference type="ChEBI" id="CHEBI:29105"/>
    </ligand>
</feature>
<feature type="binding site" evidence="2">
    <location>
        <position position="213"/>
    </location>
    <ligand>
        <name>Zn(2+)</name>
        <dbReference type="ChEBI" id="CHEBI:29105"/>
    </ligand>
</feature>
<feature type="sequence conflict" description="In Ref. 1; AAG42755." evidence="7" ref="1">
    <original>G</original>
    <variation>A</variation>
    <location>
        <position position="601"/>
    </location>
</feature>
<feature type="strand" evidence="8">
    <location>
        <begin position="603"/>
        <end position="605"/>
    </location>
</feature>
<feature type="helix" evidence="8">
    <location>
        <begin position="616"/>
        <end position="625"/>
    </location>
</feature>
<feature type="helix" evidence="8">
    <location>
        <begin position="629"/>
        <end position="638"/>
    </location>
</feature>
<feature type="turn" evidence="8">
    <location>
        <begin position="639"/>
        <end position="641"/>
    </location>
</feature>
<feature type="helix" evidence="8">
    <location>
        <begin position="644"/>
        <end position="654"/>
    </location>
</feature>
<feature type="turn" evidence="8">
    <location>
        <begin position="659"/>
        <end position="661"/>
    </location>
</feature>
<feature type="helix" evidence="9">
    <location>
        <begin position="673"/>
        <end position="682"/>
    </location>
</feature>
<feature type="helix" evidence="9">
    <location>
        <begin position="686"/>
        <end position="695"/>
    </location>
</feature>
<feature type="helix" evidence="9">
    <location>
        <begin position="700"/>
        <end position="709"/>
    </location>
</feature>
<dbReference type="EC" id="3.4.19.12"/>
<dbReference type="EMBL" id="AF302664">
    <property type="protein sequence ID" value="AAG42755.1"/>
    <property type="molecule type" value="mRNA"/>
</dbReference>
<dbReference type="EMBL" id="AP000410">
    <property type="protein sequence ID" value="BAB01171.1"/>
    <property type="molecule type" value="Genomic_DNA"/>
</dbReference>
<dbReference type="EMBL" id="AP002034">
    <property type="protein sequence ID" value="BAB01171.1"/>
    <property type="status" value="JOINED"/>
    <property type="molecule type" value="Genomic_DNA"/>
</dbReference>
<dbReference type="EMBL" id="CP002686">
    <property type="protein sequence ID" value="AEE76405.1"/>
    <property type="molecule type" value="Genomic_DNA"/>
</dbReference>
<dbReference type="EMBL" id="AY140096">
    <property type="protein sequence ID" value="AAM98237.1"/>
    <property type="molecule type" value="mRNA"/>
</dbReference>
<dbReference type="EMBL" id="AK226894">
    <property type="protein sequence ID" value="BAE98971.1"/>
    <property type="molecule type" value="mRNA"/>
</dbReference>
<dbReference type="RefSeq" id="NP_566666.2">
    <property type="nucleotide sequence ID" value="NM_112954.4"/>
</dbReference>
<dbReference type="PDB" id="1VEK">
    <property type="method" value="NMR"/>
    <property type="chains" value="A=594-664"/>
</dbReference>
<dbReference type="PDB" id="1WIV">
    <property type="method" value="NMR"/>
    <property type="chains" value="A=651-710"/>
</dbReference>
<dbReference type="PDBsum" id="1VEK"/>
<dbReference type="PDBsum" id="1WIV"/>
<dbReference type="SMR" id="Q8L6Y1"/>
<dbReference type="BioGRID" id="6942">
    <property type="interactions" value="10"/>
</dbReference>
<dbReference type="FunCoup" id="Q8L6Y1">
    <property type="interactions" value="4785"/>
</dbReference>
<dbReference type="STRING" id="3702.Q8L6Y1"/>
<dbReference type="MEROPS" id="C19.084"/>
<dbReference type="iPTMnet" id="Q8L6Y1"/>
<dbReference type="PaxDb" id="3702-AT3G20630.1"/>
<dbReference type="ProteomicsDB" id="233047"/>
<dbReference type="DNASU" id="821610"/>
<dbReference type="EnsemblPlants" id="AT3G20630.1">
    <property type="protein sequence ID" value="AT3G20630.1"/>
    <property type="gene ID" value="AT3G20630"/>
</dbReference>
<dbReference type="GeneID" id="821610"/>
<dbReference type="Gramene" id="AT3G20630.1">
    <property type="protein sequence ID" value="AT3G20630.1"/>
    <property type="gene ID" value="AT3G20630"/>
</dbReference>
<dbReference type="KEGG" id="ath:AT3G20630"/>
<dbReference type="Araport" id="AT3G20630"/>
<dbReference type="TAIR" id="AT3G20630">
    <property type="gene designation" value="UBP14"/>
</dbReference>
<dbReference type="eggNOG" id="KOG0944">
    <property type="taxonomic scope" value="Eukaryota"/>
</dbReference>
<dbReference type="HOGENOM" id="CLU_009884_1_0_1"/>
<dbReference type="InParanoid" id="Q8L6Y1"/>
<dbReference type="OMA" id="FVPCEHT"/>
<dbReference type="PhylomeDB" id="Q8L6Y1"/>
<dbReference type="EvolutionaryTrace" id="Q8L6Y1"/>
<dbReference type="PRO" id="PR:Q8L6Y1"/>
<dbReference type="Proteomes" id="UP000006548">
    <property type="component" value="Chromosome 3"/>
</dbReference>
<dbReference type="ExpressionAtlas" id="Q8L6Y1">
    <property type="expression patterns" value="baseline and differential"/>
</dbReference>
<dbReference type="GO" id="GO:0005829">
    <property type="term" value="C:cytosol"/>
    <property type="evidence" value="ECO:0007005"/>
    <property type="project" value="TAIR"/>
</dbReference>
<dbReference type="GO" id="GO:0005634">
    <property type="term" value="C:nucleus"/>
    <property type="evidence" value="ECO:0000314"/>
    <property type="project" value="TAIR"/>
</dbReference>
<dbReference type="GO" id="GO:0004843">
    <property type="term" value="F:cysteine-type deubiquitinase activity"/>
    <property type="evidence" value="ECO:0000314"/>
    <property type="project" value="TAIR"/>
</dbReference>
<dbReference type="GO" id="GO:1990450">
    <property type="term" value="F:linear polyubiquitin binding"/>
    <property type="evidence" value="ECO:0000314"/>
    <property type="project" value="TAIR"/>
</dbReference>
<dbReference type="GO" id="GO:0061815">
    <property type="term" value="F:Met1-linked polyubiquitin deubiquitinase activity"/>
    <property type="evidence" value="ECO:0000314"/>
    <property type="project" value="TAIR"/>
</dbReference>
<dbReference type="GO" id="GO:0008270">
    <property type="term" value="F:zinc ion binding"/>
    <property type="evidence" value="ECO:0007669"/>
    <property type="project" value="UniProtKB-KW"/>
</dbReference>
<dbReference type="GO" id="GO:0009734">
    <property type="term" value="P:auxin-activated signaling pathway"/>
    <property type="evidence" value="ECO:0000315"/>
    <property type="project" value="TAIR"/>
</dbReference>
<dbReference type="GO" id="GO:0071370">
    <property type="term" value="P:cellular response to gibberellin stimulus"/>
    <property type="evidence" value="ECO:0000316"/>
    <property type="project" value="TAIR"/>
</dbReference>
<dbReference type="GO" id="GO:0009793">
    <property type="term" value="P:embryo development ending in seed dormancy"/>
    <property type="evidence" value="ECO:0000315"/>
    <property type="project" value="TAIR"/>
</dbReference>
<dbReference type="GO" id="GO:0009965">
    <property type="term" value="P:leaf morphogenesis"/>
    <property type="evidence" value="ECO:0000315"/>
    <property type="project" value="TAIR"/>
</dbReference>
<dbReference type="GO" id="GO:0016579">
    <property type="term" value="P:protein deubiquitination"/>
    <property type="evidence" value="ECO:0000314"/>
    <property type="project" value="TAIR"/>
</dbReference>
<dbReference type="GO" id="GO:0006508">
    <property type="term" value="P:proteolysis"/>
    <property type="evidence" value="ECO:0007669"/>
    <property type="project" value="UniProtKB-KW"/>
</dbReference>
<dbReference type="GO" id="GO:0042127">
    <property type="term" value="P:regulation of cell population proliferation"/>
    <property type="evidence" value="ECO:0000315"/>
    <property type="project" value="TAIR"/>
</dbReference>
<dbReference type="GO" id="GO:0048767">
    <property type="term" value="P:root hair elongation"/>
    <property type="evidence" value="ECO:0000315"/>
    <property type="project" value="TAIR"/>
</dbReference>
<dbReference type="CDD" id="cd02658">
    <property type="entry name" value="Peptidase_C19B"/>
    <property type="match status" value="1"/>
</dbReference>
<dbReference type="CDD" id="cd14295">
    <property type="entry name" value="UBA1_atUBP14"/>
    <property type="match status" value="1"/>
</dbReference>
<dbReference type="CDD" id="cd14388">
    <property type="entry name" value="UBA2_atUBP14"/>
    <property type="match status" value="1"/>
</dbReference>
<dbReference type="FunFam" id="1.10.8.10:FF:000086">
    <property type="entry name" value="Ubiquitin carboxyl-terminal hydrolase"/>
    <property type="match status" value="1"/>
</dbReference>
<dbReference type="FunFam" id="1.10.8.10:FF:000103">
    <property type="entry name" value="Ubiquitin carboxyl-terminal hydrolase"/>
    <property type="match status" value="1"/>
</dbReference>
<dbReference type="FunFam" id="3.30.40.10:FF:000026">
    <property type="entry name" value="Ubiquitin carboxyl-terminal hydrolase"/>
    <property type="match status" value="1"/>
</dbReference>
<dbReference type="FunFam" id="3.30.40.10:FF:000371">
    <property type="entry name" value="Ubiquitin carboxyl-terminal hydrolase"/>
    <property type="match status" value="1"/>
</dbReference>
<dbReference type="FunFam" id="3.90.70.10:FF:000099">
    <property type="entry name" value="Ubiquitin carboxyl-terminal hydrolase"/>
    <property type="match status" value="1"/>
</dbReference>
<dbReference type="Gene3D" id="3.90.70.10">
    <property type="entry name" value="Cysteine proteinases"/>
    <property type="match status" value="1"/>
</dbReference>
<dbReference type="Gene3D" id="1.10.8.10">
    <property type="entry name" value="DNA helicase RuvA subunit, C-terminal domain"/>
    <property type="match status" value="2"/>
</dbReference>
<dbReference type="Gene3D" id="3.30.40.10">
    <property type="entry name" value="Zinc/RING finger domain, C3HC4 (zinc finger)"/>
    <property type="match status" value="2"/>
</dbReference>
<dbReference type="InterPro" id="IPR038765">
    <property type="entry name" value="Papain-like_cys_pep_sf"/>
</dbReference>
<dbReference type="InterPro" id="IPR001394">
    <property type="entry name" value="Peptidase_C19_UCH"/>
</dbReference>
<dbReference type="InterPro" id="IPR050185">
    <property type="entry name" value="Ub_carboxyl-term_hydrolase"/>
</dbReference>
<dbReference type="InterPro" id="IPR015940">
    <property type="entry name" value="UBA"/>
</dbReference>
<dbReference type="InterPro" id="IPR009060">
    <property type="entry name" value="UBA-like_sf"/>
</dbReference>
<dbReference type="InterPro" id="IPR016652">
    <property type="entry name" value="Ubiquitinyl_hydrolase"/>
</dbReference>
<dbReference type="InterPro" id="IPR041432">
    <property type="entry name" value="UBP13_Znf-UBP_var"/>
</dbReference>
<dbReference type="InterPro" id="IPR018200">
    <property type="entry name" value="USP_CS"/>
</dbReference>
<dbReference type="InterPro" id="IPR028889">
    <property type="entry name" value="USP_dom"/>
</dbReference>
<dbReference type="InterPro" id="IPR013083">
    <property type="entry name" value="Znf_RING/FYVE/PHD"/>
</dbReference>
<dbReference type="InterPro" id="IPR001607">
    <property type="entry name" value="Znf_UBP"/>
</dbReference>
<dbReference type="PANTHER" id="PTHR21646">
    <property type="entry name" value="UBIQUITIN CARBOXYL-TERMINAL HYDROLASE"/>
    <property type="match status" value="1"/>
</dbReference>
<dbReference type="PANTHER" id="PTHR21646:SF10">
    <property type="entry name" value="UBIQUITIN CARBOXYL-TERMINAL HYDROLASE 14"/>
    <property type="match status" value="1"/>
</dbReference>
<dbReference type="Pfam" id="PF22562">
    <property type="entry name" value="UBA_7"/>
    <property type="match status" value="2"/>
</dbReference>
<dbReference type="Pfam" id="PF00443">
    <property type="entry name" value="UCH"/>
    <property type="match status" value="1"/>
</dbReference>
<dbReference type="Pfam" id="PF02148">
    <property type="entry name" value="zf-UBP"/>
    <property type="match status" value="1"/>
</dbReference>
<dbReference type="Pfam" id="PF17807">
    <property type="entry name" value="zf-UBP_var"/>
    <property type="match status" value="1"/>
</dbReference>
<dbReference type="PIRSF" id="PIRSF016308">
    <property type="entry name" value="UBP"/>
    <property type="match status" value="1"/>
</dbReference>
<dbReference type="SMART" id="SM00165">
    <property type="entry name" value="UBA"/>
    <property type="match status" value="2"/>
</dbReference>
<dbReference type="SMART" id="SM00290">
    <property type="entry name" value="ZnF_UBP"/>
    <property type="match status" value="1"/>
</dbReference>
<dbReference type="SUPFAM" id="SSF54001">
    <property type="entry name" value="Cysteine proteinases"/>
    <property type="match status" value="1"/>
</dbReference>
<dbReference type="SUPFAM" id="SSF57850">
    <property type="entry name" value="RING/U-box"/>
    <property type="match status" value="1"/>
</dbReference>
<dbReference type="SUPFAM" id="SSF46934">
    <property type="entry name" value="UBA-like"/>
    <property type="match status" value="1"/>
</dbReference>
<dbReference type="PROSITE" id="PS50030">
    <property type="entry name" value="UBA"/>
    <property type="match status" value="2"/>
</dbReference>
<dbReference type="PROSITE" id="PS00972">
    <property type="entry name" value="USP_1"/>
    <property type="match status" value="1"/>
</dbReference>
<dbReference type="PROSITE" id="PS00973">
    <property type="entry name" value="USP_2"/>
    <property type="match status" value="1"/>
</dbReference>
<dbReference type="PROSITE" id="PS50235">
    <property type="entry name" value="USP_3"/>
    <property type="match status" value="1"/>
</dbReference>
<dbReference type="PROSITE" id="PS50271">
    <property type="entry name" value="ZF_UBP"/>
    <property type="match status" value="1"/>
</dbReference>
<comment type="function">
    <text evidence="5 6">Recognizes and hydrolyzes the peptide bond at the C-terminal Gly of ubiquitin. Involved in the processing of poly-ubiquitin precursors as well as that of ubiquitinated proteins. Involved in seed and embryo development.</text>
</comment>
<comment type="catalytic activity">
    <reaction>
        <text>Thiol-dependent hydrolysis of ester, thioester, amide, peptide and isopeptide bonds formed by the C-terminal Gly of ubiquitin (a 76-residue protein attached to proteins as an intracellular targeting signal).</text>
        <dbReference type="EC" id="3.4.19.12"/>
    </reaction>
</comment>
<comment type="tissue specificity">
    <text evidence="5">Constitutively and ubiquitously expressed (at protein level).</text>
</comment>
<comment type="similarity">
    <text evidence="7">Belongs to the peptidase C19 family.</text>
</comment>
<organism>
    <name type="scientific">Arabidopsis thaliana</name>
    <name type="common">Mouse-ear cress</name>
    <dbReference type="NCBI Taxonomy" id="3702"/>
    <lineage>
        <taxon>Eukaryota</taxon>
        <taxon>Viridiplantae</taxon>
        <taxon>Streptophyta</taxon>
        <taxon>Embryophyta</taxon>
        <taxon>Tracheophyta</taxon>
        <taxon>Spermatophyta</taxon>
        <taxon>Magnoliopsida</taxon>
        <taxon>eudicotyledons</taxon>
        <taxon>Gunneridae</taxon>
        <taxon>Pentapetalae</taxon>
        <taxon>rosids</taxon>
        <taxon>malvids</taxon>
        <taxon>Brassicales</taxon>
        <taxon>Brassicaceae</taxon>
        <taxon>Camelineae</taxon>
        <taxon>Arabidopsis</taxon>
    </lineage>
</organism>
<reference key="1">
    <citation type="journal article" date="2000" name="Plant Physiol.">
        <title>The ubiquitin-specific protease family from Arabidopsis. AtUBP1 and 2 are required for the resistance to the amino acid analog canavanine.</title>
        <authorList>
            <person name="Yan N."/>
            <person name="Doelling J.H."/>
            <person name="Falbel T.G."/>
            <person name="Durski A.M."/>
            <person name="Vierstra R.D."/>
        </authorList>
    </citation>
    <scope>NUCLEOTIDE SEQUENCE [MRNA]</scope>
    <scope>GENE FAMILY ORGANIZATION</scope>
    <scope>NOMENCLATURE</scope>
    <source>
        <strain>cv. Columbia</strain>
    </source>
</reference>
<reference key="2">
    <citation type="journal article" date="2000" name="DNA Res.">
        <title>Structural analysis of Arabidopsis thaliana chromosome 3. II. Sequence features of the 4,251,695 bp regions covered by 90 P1, TAC and BAC clones.</title>
        <authorList>
            <person name="Kaneko T."/>
            <person name="Katoh T."/>
            <person name="Sato S."/>
            <person name="Nakamura Y."/>
            <person name="Asamizu E."/>
            <person name="Tabata S."/>
        </authorList>
    </citation>
    <scope>NUCLEOTIDE SEQUENCE [LARGE SCALE GENOMIC DNA]</scope>
    <source>
        <strain>cv. Columbia</strain>
    </source>
</reference>
<reference key="3">
    <citation type="journal article" date="2017" name="Plant J.">
        <title>Araport11: a complete reannotation of the Arabidopsis thaliana reference genome.</title>
        <authorList>
            <person name="Cheng C.Y."/>
            <person name="Krishnakumar V."/>
            <person name="Chan A.P."/>
            <person name="Thibaud-Nissen F."/>
            <person name="Schobel S."/>
            <person name="Town C.D."/>
        </authorList>
    </citation>
    <scope>GENOME REANNOTATION</scope>
    <source>
        <strain>cv. Columbia</strain>
    </source>
</reference>
<reference key="4">
    <citation type="journal article" date="2003" name="Science">
        <title>Empirical analysis of transcriptional activity in the Arabidopsis genome.</title>
        <authorList>
            <person name="Yamada K."/>
            <person name="Lim J."/>
            <person name="Dale J.M."/>
            <person name="Chen H."/>
            <person name="Shinn P."/>
            <person name="Palm C.J."/>
            <person name="Southwick A.M."/>
            <person name="Wu H.C."/>
            <person name="Kim C.J."/>
            <person name="Nguyen M."/>
            <person name="Pham P.K."/>
            <person name="Cheuk R.F."/>
            <person name="Karlin-Newmann G."/>
            <person name="Liu S.X."/>
            <person name="Lam B."/>
            <person name="Sakano H."/>
            <person name="Wu T."/>
            <person name="Yu G."/>
            <person name="Miranda M."/>
            <person name="Quach H.L."/>
            <person name="Tripp M."/>
            <person name="Chang C.H."/>
            <person name="Lee J.M."/>
            <person name="Toriumi M.J."/>
            <person name="Chan M.M."/>
            <person name="Tang C.C."/>
            <person name="Onodera C.S."/>
            <person name="Deng J.M."/>
            <person name="Akiyama K."/>
            <person name="Ansari Y."/>
            <person name="Arakawa T."/>
            <person name="Banh J."/>
            <person name="Banno F."/>
            <person name="Bowser L."/>
            <person name="Brooks S.Y."/>
            <person name="Carninci P."/>
            <person name="Chao Q."/>
            <person name="Choy N."/>
            <person name="Enju A."/>
            <person name="Goldsmith A.D."/>
            <person name="Gurjal M."/>
            <person name="Hansen N.F."/>
            <person name="Hayashizaki Y."/>
            <person name="Johnson-Hopson C."/>
            <person name="Hsuan V.W."/>
            <person name="Iida K."/>
            <person name="Karnes M."/>
            <person name="Khan S."/>
            <person name="Koesema E."/>
            <person name="Ishida J."/>
            <person name="Jiang P.X."/>
            <person name="Jones T."/>
            <person name="Kawai J."/>
            <person name="Kamiya A."/>
            <person name="Meyers C."/>
            <person name="Nakajima M."/>
            <person name="Narusaka M."/>
            <person name="Seki M."/>
            <person name="Sakurai T."/>
            <person name="Satou M."/>
            <person name="Tamse R."/>
            <person name="Vaysberg M."/>
            <person name="Wallender E.K."/>
            <person name="Wong C."/>
            <person name="Yamamura Y."/>
            <person name="Yuan S."/>
            <person name="Shinozaki K."/>
            <person name="Davis R.W."/>
            <person name="Theologis A."/>
            <person name="Ecker J.R."/>
        </authorList>
    </citation>
    <scope>NUCLEOTIDE SEQUENCE [LARGE SCALE MRNA]</scope>
    <source>
        <strain>cv. Columbia</strain>
    </source>
</reference>
<reference key="5">
    <citation type="submission" date="2006-07" db="EMBL/GenBank/DDBJ databases">
        <title>Large-scale analysis of RIKEN Arabidopsis full-length (RAFL) cDNAs.</title>
        <authorList>
            <person name="Totoki Y."/>
            <person name="Seki M."/>
            <person name="Ishida J."/>
            <person name="Nakajima M."/>
            <person name="Enju A."/>
            <person name="Kamiya A."/>
            <person name="Narusaka M."/>
            <person name="Shin-i T."/>
            <person name="Nakagawa M."/>
            <person name="Sakamoto N."/>
            <person name="Oishi K."/>
            <person name="Kohara Y."/>
            <person name="Kobayashi M."/>
            <person name="Toyoda A."/>
            <person name="Sakaki Y."/>
            <person name="Sakurai T."/>
            <person name="Iida K."/>
            <person name="Akiyama K."/>
            <person name="Satou M."/>
            <person name="Toyoda T."/>
            <person name="Konagaya A."/>
            <person name="Carninci P."/>
            <person name="Kawai J."/>
            <person name="Hayashizaki Y."/>
            <person name="Shinozaki K."/>
        </authorList>
    </citation>
    <scope>NUCLEOTIDE SEQUENCE [LARGE SCALE MRNA]</scope>
    <source>
        <strain>cv. Columbia</strain>
    </source>
</reference>
<reference key="6">
    <citation type="journal article" date="2001" name="Plant J.">
        <title>The ubiquitin-specific protease UBP14 is essential for early embryo development in Arabidopsis thaliana.</title>
        <authorList>
            <person name="Doelling J.H."/>
            <person name="Yan N."/>
            <person name="Kurepa J."/>
            <person name="Walker J."/>
            <person name="Vierstra R.D."/>
        </authorList>
    </citation>
    <scope>FUNCTION</scope>
    <scope>TISSUE SPECIFICITY</scope>
</reference>
<reference key="7">
    <citation type="journal article" date="2002" name="Plant Physiol.">
        <title>Diversity of TITAN functions in Arabidopsis seed development.</title>
        <authorList>
            <person name="Tzafrir I."/>
            <person name="McElver J.A."/>
            <person name="Liu C.-M."/>
            <person name="Yang L.J."/>
            <person name="Wu J.Q."/>
            <person name="Martinez A."/>
            <person name="Patton D.A."/>
            <person name="Meinke D.W."/>
        </authorList>
    </citation>
    <scope>FUNCTION</scope>
</reference>
<reference key="8">
    <citation type="journal article" date="2007" name="Mol. Cell. Proteomics">
        <title>Multidimensional protein identification technology (MudPIT) analysis of ubiquitinated proteins in plants.</title>
        <authorList>
            <person name="Maor R."/>
            <person name="Jones A."/>
            <person name="Nuehse T.S."/>
            <person name="Studholme D.J."/>
            <person name="Peck S.C."/>
            <person name="Shirasu K."/>
        </authorList>
    </citation>
    <scope>IDENTIFICATION BY MASS SPECTROMETRY [LARGE SCALE ANALYSIS]</scope>
    <source>
        <strain>cv. Landsberg erecta</strain>
    </source>
</reference>
<reference key="9">
    <citation type="submission" date="2004-09" db="PDB data bank">
        <title>Solution structure of RSGI RUH-011, a UBA domain from Arabidopsis cDNA.</title>
        <authorList>
            <consortium name="RIKEN structural genomics initiative (RSGI)"/>
        </authorList>
    </citation>
    <scope>STRUCTURE BY NMR OF 594-665</scope>
</reference>
<reference key="10">
    <citation type="submission" date="2004-11" db="PDB data bank">
        <title>Solution structure of RSGI RUH-023, a UBA domain from Arabidopsis cDNA.</title>
        <authorList>
            <consortium name="RIKEN structural genomics initiative (RSGI)"/>
        </authorList>
    </citation>
    <scope>STRUCTURE BY NMR OF 651-710</scope>
</reference>
<keyword id="KW-0002">3D-structure</keyword>
<keyword id="KW-0378">Hydrolase</keyword>
<keyword id="KW-0479">Metal-binding</keyword>
<keyword id="KW-0645">Protease</keyword>
<keyword id="KW-1185">Reference proteome</keyword>
<keyword id="KW-0677">Repeat</keyword>
<keyword id="KW-0788">Thiol protease</keyword>
<keyword id="KW-0833">Ubl conjugation pathway</keyword>
<keyword id="KW-0862">Zinc</keyword>
<keyword id="KW-0863">Zinc-finger</keyword>
<sequence length="797" mass="88374">MELLRSNLSRVQIPEPTHRIYKHECCISFDTPRSEGGLFVDMNSFLAFGKDYVSWNYEKTGNPVYLHIKQTRKSIPEDRPLKKPTLLAIGVDGGFDNNEPEYEESYSIVILPDFVSLPFPSVELPEKVRIAVDTVVNAVGAERKEQVAAWTAEKKLISEHALTLQQIKSGIVIPPSGWKCSKCDKTENLWLNLTDGMILCGRKNWDGTGGNNHAVEHYKETAYPLAVKLGTITADLEAADVYSYPEDDSVLDPLLAEHLAHFGIDFSSMQKTEMTTAERELDQNTNFDWNRIQESGKELVPVFGPGYTGLVNLGNSCYLAATMQIVFSTHSFISRYFSHQSLKMAFEMAPADPTLDLNMQLTKLGHGLLSGKYSMPATQKDATTGDPRQEGIPPRMFKNVIAASHAEFSSMRQQDALDFFLHLVGKVERASNTTPDLDPSRSFKFGIEEKILCPSGKVGYNKREDCILSLNIPLHEATNKDELEAFHKQKAGKGLEENDMRSSDEIVRPRVPLEACLANFASSEPIEDYYSSALKGMTTAIKTTGLTSFPDYLVLHMRKFVMEEGWVPKKLDVYIDVPDVIDISHMRSKGLQPGEELLPDGVPEEVMESAQPVANEEIVAQLVSMGFSQLHCQKAAINTSNAGVEEAMNWLLSHMDDPDIDAPISHQTSDIDQSSVDTLLSFGFAEDVARKALKASGGDIEKATDWVFNNPNASVSDMDVSSSNSAQTPAQSGLPDGGGKYKLFGIVSHMGTSVHCGHYVAHILKEGRWVIFNDDKVGISTDPPKDMGYVYFFQRLD</sequence>